<feature type="chain" id="PRO_0000193837" description="Coatomer subunit beta">
    <location>
        <begin position="1"/>
        <end position="964"/>
    </location>
</feature>
<feature type="repeat" description="HEAT 1">
    <location>
        <begin position="129"/>
        <end position="166"/>
    </location>
</feature>
<feature type="repeat" description="HEAT 2">
    <location>
        <begin position="238"/>
        <end position="275"/>
    </location>
</feature>
<feature type="repeat" description="HEAT 3">
    <location>
        <begin position="314"/>
        <end position="351"/>
    </location>
</feature>
<feature type="repeat" description="HEAT 4">
    <location>
        <begin position="393"/>
        <end position="430"/>
    </location>
</feature>
<feature type="repeat" description="HEAT 5">
    <location>
        <begin position="466"/>
        <end position="506"/>
    </location>
</feature>
<feature type="region of interest" description="Disordered" evidence="2">
    <location>
        <begin position="490"/>
        <end position="530"/>
    </location>
</feature>
<feature type="compositionally biased region" description="Basic and acidic residues" evidence="2">
    <location>
        <begin position="490"/>
        <end position="501"/>
    </location>
</feature>
<feature type="compositionally biased region" description="Low complexity" evidence="2">
    <location>
        <begin position="512"/>
        <end position="526"/>
    </location>
</feature>
<feature type="sequence conflict" description="In Ref. 1; AAA21090." evidence="7" ref="1">
    <original>Q</original>
    <variation>E</variation>
    <location>
        <position position="68"/>
    </location>
</feature>
<feature type="sequence conflict" description="In Ref. 1; AAA21090." evidence="7" ref="1">
    <original>V</original>
    <variation>A</variation>
    <location>
        <position position="168"/>
    </location>
</feature>
<feature type="sequence conflict" description="In Ref. 1; AAA21090." evidence="7" ref="1">
    <original>ER</original>
    <variation>DG</variation>
    <location>
        <begin position="239"/>
        <end position="240"/>
    </location>
</feature>
<feature type="sequence conflict" description="In Ref. 1; AAA21090." evidence="7" ref="1">
    <original>R</original>
    <variation>P</variation>
    <location>
        <position position="325"/>
    </location>
</feature>
<feature type="sequence conflict" description="In Ref. 1; AAA21090." evidence="7" ref="1">
    <original>AGGNAAGSA</original>
    <variation>EAAMQLDR</variation>
    <location>
        <begin position="507"/>
        <end position="515"/>
    </location>
</feature>
<feature type="sequence conflict" description="In Ref. 1; AAA21090." evidence="7" ref="1">
    <original>A</original>
    <variation>P</variation>
    <location>
        <position position="543"/>
    </location>
</feature>
<feature type="sequence conflict" description="In Ref. 1; AAA21090." evidence="7" ref="1">
    <original>IRAKSQ</original>
    <variation>LRQES</variation>
    <location>
        <begin position="938"/>
        <end position="943"/>
    </location>
</feature>
<name>COPB_DROME</name>
<reference key="1">
    <citation type="journal article" date="1994" name="Proc. Natl. Acad. Sci. U.S.A.">
        <title>Location of Golgi membranes with reference to dividing nuclei in syncytial Drosophila embryos.</title>
        <authorList>
            <person name="Ripoche J."/>
            <person name="Link B."/>
            <person name="Yucel J.K."/>
            <person name="Tokuyasu K."/>
            <person name="Malhotra V."/>
        </authorList>
    </citation>
    <scope>NUCLEOTIDE SEQUENCE [MRNA]</scope>
    <scope>SUBCELLULAR LOCATION</scope>
    <scope>DEVELOPMENTAL STAGE</scope>
    <source>
        <tissue>Embryo</tissue>
    </source>
</reference>
<reference key="2">
    <citation type="journal article" date="2000" name="Science">
        <title>The genome sequence of Drosophila melanogaster.</title>
        <authorList>
            <person name="Adams M.D."/>
            <person name="Celniker S.E."/>
            <person name="Holt R.A."/>
            <person name="Evans C.A."/>
            <person name="Gocayne J.D."/>
            <person name="Amanatides P.G."/>
            <person name="Scherer S.E."/>
            <person name="Li P.W."/>
            <person name="Hoskins R.A."/>
            <person name="Galle R.F."/>
            <person name="George R.A."/>
            <person name="Lewis S.E."/>
            <person name="Richards S."/>
            <person name="Ashburner M."/>
            <person name="Henderson S.N."/>
            <person name="Sutton G.G."/>
            <person name="Wortman J.R."/>
            <person name="Yandell M.D."/>
            <person name="Zhang Q."/>
            <person name="Chen L.X."/>
            <person name="Brandon R.C."/>
            <person name="Rogers Y.-H.C."/>
            <person name="Blazej R.G."/>
            <person name="Champe M."/>
            <person name="Pfeiffer B.D."/>
            <person name="Wan K.H."/>
            <person name="Doyle C."/>
            <person name="Baxter E.G."/>
            <person name="Helt G."/>
            <person name="Nelson C.R."/>
            <person name="Miklos G.L.G."/>
            <person name="Abril J.F."/>
            <person name="Agbayani A."/>
            <person name="An H.-J."/>
            <person name="Andrews-Pfannkoch C."/>
            <person name="Baldwin D."/>
            <person name="Ballew R.M."/>
            <person name="Basu A."/>
            <person name="Baxendale J."/>
            <person name="Bayraktaroglu L."/>
            <person name="Beasley E.M."/>
            <person name="Beeson K.Y."/>
            <person name="Benos P.V."/>
            <person name="Berman B.P."/>
            <person name="Bhandari D."/>
            <person name="Bolshakov S."/>
            <person name="Borkova D."/>
            <person name="Botchan M.R."/>
            <person name="Bouck J."/>
            <person name="Brokstein P."/>
            <person name="Brottier P."/>
            <person name="Burtis K.C."/>
            <person name="Busam D.A."/>
            <person name="Butler H."/>
            <person name="Cadieu E."/>
            <person name="Center A."/>
            <person name="Chandra I."/>
            <person name="Cherry J.M."/>
            <person name="Cawley S."/>
            <person name="Dahlke C."/>
            <person name="Davenport L.B."/>
            <person name="Davies P."/>
            <person name="de Pablos B."/>
            <person name="Delcher A."/>
            <person name="Deng Z."/>
            <person name="Mays A.D."/>
            <person name="Dew I."/>
            <person name="Dietz S.M."/>
            <person name="Dodson K."/>
            <person name="Doup L.E."/>
            <person name="Downes M."/>
            <person name="Dugan-Rocha S."/>
            <person name="Dunkov B.C."/>
            <person name="Dunn P."/>
            <person name="Durbin K.J."/>
            <person name="Evangelista C.C."/>
            <person name="Ferraz C."/>
            <person name="Ferriera S."/>
            <person name="Fleischmann W."/>
            <person name="Fosler C."/>
            <person name="Gabrielian A.E."/>
            <person name="Garg N.S."/>
            <person name="Gelbart W.M."/>
            <person name="Glasser K."/>
            <person name="Glodek A."/>
            <person name="Gong F."/>
            <person name="Gorrell J.H."/>
            <person name="Gu Z."/>
            <person name="Guan P."/>
            <person name="Harris M."/>
            <person name="Harris N.L."/>
            <person name="Harvey D.A."/>
            <person name="Heiman T.J."/>
            <person name="Hernandez J.R."/>
            <person name="Houck J."/>
            <person name="Hostin D."/>
            <person name="Houston K.A."/>
            <person name="Howland T.J."/>
            <person name="Wei M.-H."/>
            <person name="Ibegwam C."/>
            <person name="Jalali M."/>
            <person name="Kalush F."/>
            <person name="Karpen G.H."/>
            <person name="Ke Z."/>
            <person name="Kennison J.A."/>
            <person name="Ketchum K.A."/>
            <person name="Kimmel B.E."/>
            <person name="Kodira C.D."/>
            <person name="Kraft C.L."/>
            <person name="Kravitz S."/>
            <person name="Kulp D."/>
            <person name="Lai Z."/>
            <person name="Lasko P."/>
            <person name="Lei Y."/>
            <person name="Levitsky A.A."/>
            <person name="Li J.H."/>
            <person name="Li Z."/>
            <person name="Liang Y."/>
            <person name="Lin X."/>
            <person name="Liu X."/>
            <person name="Mattei B."/>
            <person name="McIntosh T.C."/>
            <person name="McLeod M.P."/>
            <person name="McPherson D."/>
            <person name="Merkulov G."/>
            <person name="Milshina N.V."/>
            <person name="Mobarry C."/>
            <person name="Morris J."/>
            <person name="Moshrefi A."/>
            <person name="Mount S.M."/>
            <person name="Moy M."/>
            <person name="Murphy B."/>
            <person name="Murphy L."/>
            <person name="Muzny D.M."/>
            <person name="Nelson D.L."/>
            <person name="Nelson D.R."/>
            <person name="Nelson K.A."/>
            <person name="Nixon K."/>
            <person name="Nusskern D.R."/>
            <person name="Pacleb J.M."/>
            <person name="Palazzolo M."/>
            <person name="Pittman G.S."/>
            <person name="Pan S."/>
            <person name="Pollard J."/>
            <person name="Puri V."/>
            <person name="Reese M.G."/>
            <person name="Reinert K."/>
            <person name="Remington K."/>
            <person name="Saunders R.D.C."/>
            <person name="Scheeler F."/>
            <person name="Shen H."/>
            <person name="Shue B.C."/>
            <person name="Siden-Kiamos I."/>
            <person name="Simpson M."/>
            <person name="Skupski M.P."/>
            <person name="Smith T.J."/>
            <person name="Spier E."/>
            <person name="Spradling A.C."/>
            <person name="Stapleton M."/>
            <person name="Strong R."/>
            <person name="Sun E."/>
            <person name="Svirskas R."/>
            <person name="Tector C."/>
            <person name="Turner R."/>
            <person name="Venter E."/>
            <person name="Wang A.H."/>
            <person name="Wang X."/>
            <person name="Wang Z.-Y."/>
            <person name="Wassarman D.A."/>
            <person name="Weinstock G.M."/>
            <person name="Weissenbach J."/>
            <person name="Williams S.M."/>
            <person name="Woodage T."/>
            <person name="Worley K.C."/>
            <person name="Wu D."/>
            <person name="Yang S."/>
            <person name="Yao Q.A."/>
            <person name="Ye J."/>
            <person name="Yeh R.-F."/>
            <person name="Zaveri J.S."/>
            <person name="Zhan M."/>
            <person name="Zhang G."/>
            <person name="Zhao Q."/>
            <person name="Zheng L."/>
            <person name="Zheng X.H."/>
            <person name="Zhong F.N."/>
            <person name="Zhong W."/>
            <person name="Zhou X."/>
            <person name="Zhu S.C."/>
            <person name="Zhu X."/>
            <person name="Smith H.O."/>
            <person name="Gibbs R.A."/>
            <person name="Myers E.W."/>
            <person name="Rubin G.M."/>
            <person name="Venter J.C."/>
        </authorList>
    </citation>
    <scope>NUCLEOTIDE SEQUENCE [LARGE SCALE GENOMIC DNA]</scope>
    <source>
        <strain>Berkeley</strain>
    </source>
</reference>
<reference key="3">
    <citation type="journal article" date="2002" name="Genome Biol.">
        <title>Annotation of the Drosophila melanogaster euchromatic genome: a systematic review.</title>
        <authorList>
            <person name="Misra S."/>
            <person name="Crosby M.A."/>
            <person name="Mungall C.J."/>
            <person name="Matthews B.B."/>
            <person name="Campbell K.S."/>
            <person name="Hradecky P."/>
            <person name="Huang Y."/>
            <person name="Kaminker J.S."/>
            <person name="Millburn G.H."/>
            <person name="Prochnik S.E."/>
            <person name="Smith C.D."/>
            <person name="Tupy J.L."/>
            <person name="Whitfield E.J."/>
            <person name="Bayraktaroglu L."/>
            <person name="Berman B.P."/>
            <person name="Bettencourt B.R."/>
            <person name="Celniker S.E."/>
            <person name="de Grey A.D.N.J."/>
            <person name="Drysdale R.A."/>
            <person name="Harris N.L."/>
            <person name="Richter J."/>
            <person name="Russo S."/>
            <person name="Schroeder A.J."/>
            <person name="Shu S.Q."/>
            <person name="Stapleton M."/>
            <person name="Yamada C."/>
            <person name="Ashburner M."/>
            <person name="Gelbart W.M."/>
            <person name="Rubin G.M."/>
            <person name="Lewis S.E."/>
        </authorList>
    </citation>
    <scope>GENOME REANNOTATION</scope>
    <source>
        <strain>Berkeley</strain>
    </source>
</reference>
<reference key="4">
    <citation type="journal article" date="2002" name="Genome Biol.">
        <title>A Drosophila full-length cDNA resource.</title>
        <authorList>
            <person name="Stapleton M."/>
            <person name="Carlson J.W."/>
            <person name="Brokstein P."/>
            <person name="Yu C."/>
            <person name="Champe M."/>
            <person name="George R.A."/>
            <person name="Guarin H."/>
            <person name="Kronmiller B."/>
            <person name="Pacleb J.M."/>
            <person name="Park S."/>
            <person name="Wan K.H."/>
            <person name="Rubin G.M."/>
            <person name="Celniker S.E."/>
        </authorList>
    </citation>
    <scope>NUCLEOTIDE SEQUENCE [LARGE SCALE MRNA]</scope>
    <source>
        <strain>Berkeley</strain>
        <tissue>Head</tissue>
    </source>
</reference>
<reference key="5">
    <citation type="journal article" date="2000" name="J. Cell Biol.">
        <title>Polarized insertion of new membrane from a cytoplasmic reservoir during cleavage of the Drosophila embryo.</title>
        <authorList>
            <person name="Lecuit T."/>
            <person name="Wieschaus E."/>
        </authorList>
    </citation>
    <scope>SUBCELLULAR LOCATION</scope>
</reference>
<reference key="6">
    <citation type="journal article" date="2001" name="Nat. Cell Biol.">
        <title>UDP-sugar transporter implicated in glycosylation and processing of Notch.</title>
        <authorList>
            <person name="Goto S."/>
            <person name="Taniguchi M."/>
            <person name="Muraoka M."/>
            <person name="Toyoda H."/>
            <person name="Sado Y."/>
            <person name="Kawakita M."/>
            <person name="Hayashi S."/>
        </authorList>
    </citation>
    <scope>SUBCELLULAR LOCATION</scope>
</reference>
<reference key="7">
    <citation type="journal article" date="2005" name="Gene Expr. Patterns">
        <title>Expression of COPI components during development of Drosophila melanogaster.</title>
        <authorList>
            <person name="Grieder N.C."/>
            <person name="Kloter U."/>
            <person name="Gehring W.J."/>
        </authorList>
    </citation>
    <scope>TISSUE SPECIFICITY</scope>
    <scope>DEVELOPMENTAL STAGE</scope>
</reference>
<reference key="8">
    <citation type="journal article" date="2006" name="Nature">
        <title>Functional genomics reveals genes involved in protein secretion and Golgi organization.</title>
        <authorList>
            <person name="Bard F."/>
            <person name="Casano L."/>
            <person name="Mallabiabarrena A."/>
            <person name="Wallace E."/>
            <person name="Saito K."/>
            <person name="Kitayama H."/>
            <person name="Guizzunti G."/>
            <person name="Hu Y."/>
            <person name="Wendler F."/>
            <person name="Dasgupta R."/>
            <person name="Perrimon N."/>
            <person name="Malhotra V."/>
        </authorList>
    </citation>
    <scope>FUNCTION</scope>
</reference>
<reference key="9">
    <citation type="journal article" date="2008" name="PLoS Biol.">
        <title>COPI complex is a regulator of lipid homeostasis.</title>
        <authorList>
            <person name="Beller M."/>
            <person name="Sztalryd C."/>
            <person name="Southall N."/>
            <person name="Bell M."/>
            <person name="Jackle H."/>
            <person name="Auld D.S."/>
            <person name="Oliver B."/>
        </authorList>
    </citation>
    <scope>FUNCTION</scope>
</reference>
<comment type="function">
    <text evidence="4 5">The coatomer is a cytosolic protein complex that binds to dilysine motifs and reversibly associates with Golgi non-clathrin-coated vesicles, which further mediate biosynthetic protein transport from the ER, via the Golgi up to the trans Golgi network. Coatomer complex is required for budding from Golgi membranes, and is essential for the retrograde Golgi-to-ER transport of dilysine-tagged proteins. Required for limiting lipid storage in lipid droplets.</text>
</comment>
<comment type="subunit">
    <text evidence="1">Oligomeric complex that consists of at least the alpha, beta, beta', gamma, delta, epsilon and zeta subunits.</text>
</comment>
<comment type="subcellular location">
    <subcellularLocation>
        <location>Cytoplasm</location>
    </subcellularLocation>
    <subcellularLocation>
        <location>Golgi apparatus membrane</location>
        <topology>Peripheral membrane protein</topology>
        <orientation>Cytoplasmic side</orientation>
    </subcellularLocation>
    <subcellularLocation>
        <location evidence="1">Cytoplasmic vesicle</location>
        <location evidence="1">COPI-coated vesicle membrane</location>
        <topology evidence="1">Peripheral membrane protein</topology>
        <orientation evidence="1">Cytoplasmic side</orientation>
    </subcellularLocation>
    <text evidence="1">The coatomer is cytoplasmic or polymerized on the cytoplasmic side of the Golgi, as well as on the vesicles/buds originating from it (By similarity). Present within the clusters of tubulo-vesicular structures of Golgi membrane and cis-Golgi membranes.</text>
</comment>
<comment type="tissue specificity">
    <text evidence="3">During oogenesis and spermatogenesis, expressed in ovariole, germarium, testis tip and testis.</text>
</comment>
<comment type="developmental stage">
    <text evidence="3 6">Before the first zygotic nuclear division, seen in membrane structures confined in the embryonic cortex. This cortical distribution is maintained through stage 6. In cycles 10 and 11, the presence in the Golgi membranes between hexagonally arranged nuclei is readily observed in tangential optical sections through the embryonic surface. In stage 14, present in a thin vitelloplasmic layer below the plane that represents the basal borders of the cells separating the cellularized cortex from the rest of the embryo, and also within cells. Within the cells, appear to be more abundant in the cytoplasmic region between the nucleus and the embryonic surface. In early embryos, a large proportion appears randomly diffused, but in the later stages of embryogenesis, a larger proportion is associated with the membranes. In early embryos, expressed in the ovary. During embryogenesis, up-regulated in regions 2 and 3 of the germarium in meiotic cysts and in follicle cells. Expressed in testis tip starting in early meiotic spermatocytes. Also detected in paragonia. During embryogenesis, appears to be expressed ubiquitously at low levels and markedly up-regulated in the cells of the presumptive proventriculus and the salivary glands starting at stage 10.</text>
</comment>
<comment type="miscellaneous">
    <text evidence="1">Brefeldin A induces dissociation from the Golgi of betaCOP and presumably the other coatomer subunits.</text>
</comment>
<accession>P45437</accession>
<accession>Q9VWV7</accession>
<accession>Q9Y116</accession>
<evidence type="ECO:0000250" key="1"/>
<evidence type="ECO:0000256" key="2">
    <source>
        <dbReference type="SAM" id="MobiDB-lite"/>
    </source>
</evidence>
<evidence type="ECO:0000269" key="3">
    <source>
    </source>
</evidence>
<evidence type="ECO:0000269" key="4">
    <source>
    </source>
</evidence>
<evidence type="ECO:0000269" key="5">
    <source>
    </source>
</evidence>
<evidence type="ECO:0000269" key="6">
    <source>
    </source>
</evidence>
<evidence type="ECO:0000305" key="7"/>
<evidence type="ECO:0000312" key="8">
    <source>
        <dbReference type="FlyBase" id="FBgn0008635"/>
    </source>
</evidence>
<keyword id="KW-0963">Cytoplasm</keyword>
<keyword id="KW-0968">Cytoplasmic vesicle</keyword>
<keyword id="KW-0931">ER-Golgi transport</keyword>
<keyword id="KW-0333">Golgi apparatus</keyword>
<keyword id="KW-0472">Membrane</keyword>
<keyword id="KW-0653">Protein transport</keyword>
<keyword id="KW-1185">Reference proteome</keyword>
<keyword id="KW-0677">Repeat</keyword>
<keyword id="KW-0813">Transport</keyword>
<dbReference type="EMBL" id="L31852">
    <property type="protein sequence ID" value="AAA21090.1"/>
    <property type="molecule type" value="mRNA"/>
</dbReference>
<dbReference type="EMBL" id="AE014298">
    <property type="protein sequence ID" value="AAF48830.2"/>
    <property type="molecule type" value="Genomic_DNA"/>
</dbReference>
<dbReference type="EMBL" id="AF145656">
    <property type="protein sequence ID" value="AAD38631.1"/>
    <property type="molecule type" value="mRNA"/>
</dbReference>
<dbReference type="RefSeq" id="NP_523400.1">
    <property type="nucleotide sequence ID" value="NM_078676.4"/>
</dbReference>
<dbReference type="SMR" id="P45437"/>
<dbReference type="BioGRID" id="59137">
    <property type="interactions" value="37"/>
</dbReference>
<dbReference type="ComplexPortal" id="CPX-2820">
    <property type="entry name" value="COPI vesicle coat complex"/>
</dbReference>
<dbReference type="DIP" id="DIP-23112N"/>
<dbReference type="FunCoup" id="P45437">
    <property type="interactions" value="2460"/>
</dbReference>
<dbReference type="IntAct" id="P45437">
    <property type="interactions" value="80"/>
</dbReference>
<dbReference type="STRING" id="7227.FBpp0074348"/>
<dbReference type="PaxDb" id="7227-FBpp0074348"/>
<dbReference type="DNASU" id="32820"/>
<dbReference type="EnsemblMetazoa" id="FBtr0074576">
    <property type="protein sequence ID" value="FBpp0074348"/>
    <property type="gene ID" value="FBgn0008635"/>
</dbReference>
<dbReference type="GeneID" id="32820"/>
<dbReference type="KEGG" id="dme:Dmel_CG6223"/>
<dbReference type="AGR" id="FB:FBgn0008635"/>
<dbReference type="CTD" id="32820"/>
<dbReference type="FlyBase" id="FBgn0008635">
    <property type="gene designation" value="betaCOP"/>
</dbReference>
<dbReference type="VEuPathDB" id="VectorBase:FBgn0008635"/>
<dbReference type="eggNOG" id="KOG1058">
    <property type="taxonomic scope" value="Eukaryota"/>
</dbReference>
<dbReference type="GeneTree" id="ENSGT00390000005270"/>
<dbReference type="HOGENOM" id="CLU_006949_0_0_1"/>
<dbReference type="InParanoid" id="P45437"/>
<dbReference type="OMA" id="IYKNFDW"/>
<dbReference type="OrthoDB" id="10261439at2759"/>
<dbReference type="PhylomeDB" id="P45437"/>
<dbReference type="Reactome" id="R-DME-6798695">
    <property type="pathway name" value="Neutrophil degranulation"/>
</dbReference>
<dbReference type="Reactome" id="R-DME-6807878">
    <property type="pathway name" value="COPI-mediated anterograde transport"/>
</dbReference>
<dbReference type="Reactome" id="R-DME-6811434">
    <property type="pathway name" value="COPI-dependent Golgi-to-ER retrograde traffic"/>
</dbReference>
<dbReference type="SignaLink" id="P45437"/>
<dbReference type="BioGRID-ORCS" id="32820">
    <property type="hits" value="0 hits in 1 CRISPR screen"/>
</dbReference>
<dbReference type="ChiTaRS" id="betaCOP">
    <property type="organism name" value="fly"/>
</dbReference>
<dbReference type="GenomeRNAi" id="32820"/>
<dbReference type="PRO" id="PR:P45437"/>
<dbReference type="Proteomes" id="UP000000803">
    <property type="component" value="Chromosome X"/>
</dbReference>
<dbReference type="Bgee" id="FBgn0008635">
    <property type="expression patterns" value="Expressed in spermathecum and 131 other cell types or tissues"/>
</dbReference>
<dbReference type="GO" id="GO:0030126">
    <property type="term" value="C:COPI vesicle coat"/>
    <property type="evidence" value="ECO:0000318"/>
    <property type="project" value="GO_Central"/>
</dbReference>
<dbReference type="GO" id="GO:0005794">
    <property type="term" value="C:Golgi apparatus"/>
    <property type="evidence" value="ECO:0000314"/>
    <property type="project" value="FlyBase"/>
</dbReference>
<dbReference type="GO" id="GO:0000139">
    <property type="term" value="C:Golgi membrane"/>
    <property type="evidence" value="ECO:0007669"/>
    <property type="project" value="UniProtKB-SubCell"/>
</dbReference>
<dbReference type="GO" id="GO:0005198">
    <property type="term" value="F:structural molecule activity"/>
    <property type="evidence" value="ECO:0007669"/>
    <property type="project" value="InterPro"/>
</dbReference>
<dbReference type="GO" id="GO:0050829">
    <property type="term" value="P:defense response to Gram-negative bacterium"/>
    <property type="evidence" value="ECO:0007001"/>
    <property type="project" value="FlyBase"/>
</dbReference>
<dbReference type="GO" id="GO:0006888">
    <property type="term" value="P:endoplasmic reticulum to Golgi vesicle-mediated transport"/>
    <property type="evidence" value="ECO:0000318"/>
    <property type="project" value="GO_Central"/>
</dbReference>
<dbReference type="GO" id="GO:0046597">
    <property type="term" value="P:host-mediated suppression of symbiont invasion"/>
    <property type="evidence" value="ECO:0007001"/>
    <property type="project" value="FlyBase"/>
</dbReference>
<dbReference type="GO" id="GO:0006891">
    <property type="term" value="P:intra-Golgi vesicle-mediated transport"/>
    <property type="evidence" value="ECO:0000318"/>
    <property type="project" value="GO_Central"/>
</dbReference>
<dbReference type="GO" id="GO:0006886">
    <property type="term" value="P:intracellular protein transport"/>
    <property type="evidence" value="ECO:0007669"/>
    <property type="project" value="InterPro"/>
</dbReference>
<dbReference type="GO" id="GO:0045089">
    <property type="term" value="P:positive regulation of innate immune response"/>
    <property type="evidence" value="ECO:0007001"/>
    <property type="project" value="FlyBase"/>
</dbReference>
<dbReference type="GO" id="GO:0010883">
    <property type="term" value="P:regulation of lipid storage"/>
    <property type="evidence" value="ECO:0000314"/>
    <property type="project" value="FlyBase"/>
</dbReference>
<dbReference type="FunFam" id="1.25.10.10:FF:000311">
    <property type="entry name" value="Coatomer subunit beta"/>
    <property type="match status" value="1"/>
</dbReference>
<dbReference type="Gene3D" id="1.25.10.10">
    <property type="entry name" value="Leucine-rich Repeat Variant"/>
    <property type="match status" value="1"/>
</dbReference>
<dbReference type="InterPro" id="IPR011989">
    <property type="entry name" value="ARM-like"/>
</dbReference>
<dbReference type="InterPro" id="IPR016024">
    <property type="entry name" value="ARM-type_fold"/>
</dbReference>
<dbReference type="InterPro" id="IPR002553">
    <property type="entry name" value="Clathrin/coatomer_adapt-like_N"/>
</dbReference>
<dbReference type="InterPro" id="IPR011710">
    <property type="entry name" value="Coatomer_bsu_C"/>
</dbReference>
<dbReference type="InterPro" id="IPR016460">
    <property type="entry name" value="COPB1"/>
</dbReference>
<dbReference type="InterPro" id="IPR029446">
    <property type="entry name" value="COPB1_appendage_platform_dom"/>
</dbReference>
<dbReference type="PANTHER" id="PTHR10635">
    <property type="entry name" value="COATOMER SUBUNIT BETA"/>
    <property type="match status" value="1"/>
</dbReference>
<dbReference type="PANTHER" id="PTHR10635:SF0">
    <property type="entry name" value="COATOMER SUBUNIT BETA"/>
    <property type="match status" value="1"/>
</dbReference>
<dbReference type="Pfam" id="PF01602">
    <property type="entry name" value="Adaptin_N"/>
    <property type="match status" value="1"/>
</dbReference>
<dbReference type="Pfam" id="PF07718">
    <property type="entry name" value="Coatamer_beta_C"/>
    <property type="match status" value="1"/>
</dbReference>
<dbReference type="Pfam" id="PF14806">
    <property type="entry name" value="Coatomer_b_Cpla"/>
    <property type="match status" value="1"/>
</dbReference>
<dbReference type="PIRSF" id="PIRSF005727">
    <property type="entry name" value="Coatomer_beta_subunit"/>
    <property type="match status" value="1"/>
</dbReference>
<dbReference type="SUPFAM" id="SSF48371">
    <property type="entry name" value="ARM repeat"/>
    <property type="match status" value="1"/>
</dbReference>
<sequence length="964" mass="107407">MTSQVPCYTIINSPDLEVTNEMQLKRDLEKGDTNVKIETLKRVIKLLLNGERYPGLIMTIIRFVLPVQNHTIKKLLLIFWEIVPKTSADGKLLQEMILVCDAYRKDLQHPNEFLRGSTLRFLCKLKEPELLEPLMPAIRACLDHRHSYVRRNAVLAIFTIYKNFDWLVPDGPELIASFLDTQQDMSCKRNAFLMLLHADQERALNYLASCIDQVHTFGDILQLVIVELIYKVCHANPAERSRFIRCIYNLLNSSSNAVRYESAGTLITLSLAPTAIKAAASCYIELVVKESDNNVKLIVLDRLVAMKEHEGMEKVMQDLVMDVLRVLAAPDIEVRRKTLALALDLVYSRNIGEMVLVLKKEVAKTHNVEHEDTGKYRQLLVRTLHTCSIKFPDVAANVIPVLVEFLSDTNELAAADVLIFIREAIQKFPALRALIIEHLIEAFPQIKSSKIHRAAVWILGEYVEGSQILEVIAVIQQTLGEVPMVEAEQRRLAGDQTEEQKQQQGSAGGNAAGSAAEGSGSGNASNKVTSDGTYATQSAYSLAPVAKAEKRPPLRQYLMDGDFFIGAALSATLTKLALRYAELETEARAQNRLTTQVMLIMSSILHLGKSGFPSKPITNDDTDRIFVCLRTLSERTPEAISVFTLYCREALGKMLDAQHDEDQRMLKEKQKATAKVQPDDPVLFAQLSNGRDNQLGENVFESSLNQALAGSKNAQLSDVASPNSKLNKVTQLTGFSDPVYAEAYVNVNQYDIVLDVLIVNQTNDTLQNCTLELATLGDLKLVERPHPVVLAPHDFCNIKANVKVSSTENGIIFGNIVYETALNTNVVVLNTIHIDIMDYIIPASCTDTEFRQMWQDFEWENKVTVNTSFTDLHEYLKHLLKSTNMKCLTPEKALSGQCGFMAANMYAKSIFGENALANLSIEKPVDDPDSKVTGHIRIRAKSQGMALSLGDKISSSQKQSVQAA</sequence>
<gene>
    <name evidence="8" type="primary">betaCOP</name>
    <name evidence="8" type="ORF">CG6223</name>
</gene>
<proteinExistence type="evidence at transcript level"/>
<organism>
    <name type="scientific">Drosophila melanogaster</name>
    <name type="common">Fruit fly</name>
    <dbReference type="NCBI Taxonomy" id="7227"/>
    <lineage>
        <taxon>Eukaryota</taxon>
        <taxon>Metazoa</taxon>
        <taxon>Ecdysozoa</taxon>
        <taxon>Arthropoda</taxon>
        <taxon>Hexapoda</taxon>
        <taxon>Insecta</taxon>
        <taxon>Pterygota</taxon>
        <taxon>Neoptera</taxon>
        <taxon>Endopterygota</taxon>
        <taxon>Diptera</taxon>
        <taxon>Brachycera</taxon>
        <taxon>Muscomorpha</taxon>
        <taxon>Ephydroidea</taxon>
        <taxon>Drosophilidae</taxon>
        <taxon>Drosophila</taxon>
        <taxon>Sophophora</taxon>
    </lineage>
</organism>
<protein>
    <recommendedName>
        <fullName>Coatomer subunit beta</fullName>
    </recommendedName>
    <alternativeName>
        <fullName>Beta-coat protein</fullName>
        <shortName>Beta-COP</shortName>
    </alternativeName>
</protein>